<comment type="function">
    <text evidence="1">This protein is located at the 30S-50S ribosomal subunit interface and may play a role in the structure and function of the aminoacyl-tRNA binding site.</text>
</comment>
<comment type="similarity">
    <text evidence="1">Belongs to the bacterial ribosomal protein bL19 family.</text>
</comment>
<protein>
    <recommendedName>
        <fullName evidence="1">Large ribosomal subunit protein bL19</fullName>
    </recommendedName>
    <alternativeName>
        <fullName evidence="2">50S ribosomal protein L19</fullName>
    </alternativeName>
</protein>
<organism>
    <name type="scientific">Streptococcus agalactiae serotype Ia (strain ATCC 27591 / A909 / CDC SS700)</name>
    <dbReference type="NCBI Taxonomy" id="205921"/>
    <lineage>
        <taxon>Bacteria</taxon>
        <taxon>Bacillati</taxon>
        <taxon>Bacillota</taxon>
        <taxon>Bacilli</taxon>
        <taxon>Lactobacillales</taxon>
        <taxon>Streptococcaceae</taxon>
        <taxon>Streptococcus</taxon>
    </lineage>
</organism>
<dbReference type="EMBL" id="CP000114">
    <property type="protein sequence ID" value="ABA46136.1"/>
    <property type="molecule type" value="Genomic_DNA"/>
</dbReference>
<dbReference type="RefSeq" id="WP_001068667.1">
    <property type="nucleotide sequence ID" value="NC_007432.1"/>
</dbReference>
<dbReference type="SMR" id="Q3K2D0"/>
<dbReference type="GeneID" id="93825928"/>
<dbReference type="KEGG" id="sak:SAK_0692"/>
<dbReference type="HOGENOM" id="CLU_103507_2_1_9"/>
<dbReference type="GO" id="GO:0022625">
    <property type="term" value="C:cytosolic large ribosomal subunit"/>
    <property type="evidence" value="ECO:0007669"/>
    <property type="project" value="TreeGrafter"/>
</dbReference>
<dbReference type="GO" id="GO:0003735">
    <property type="term" value="F:structural constituent of ribosome"/>
    <property type="evidence" value="ECO:0007669"/>
    <property type="project" value="InterPro"/>
</dbReference>
<dbReference type="GO" id="GO:0006412">
    <property type="term" value="P:translation"/>
    <property type="evidence" value="ECO:0007669"/>
    <property type="project" value="UniProtKB-UniRule"/>
</dbReference>
<dbReference type="FunFam" id="2.30.30.790:FF:000001">
    <property type="entry name" value="50S ribosomal protein L19"/>
    <property type="match status" value="1"/>
</dbReference>
<dbReference type="Gene3D" id="2.30.30.790">
    <property type="match status" value="1"/>
</dbReference>
<dbReference type="HAMAP" id="MF_00402">
    <property type="entry name" value="Ribosomal_bL19"/>
    <property type="match status" value="1"/>
</dbReference>
<dbReference type="InterPro" id="IPR001857">
    <property type="entry name" value="Ribosomal_bL19"/>
</dbReference>
<dbReference type="InterPro" id="IPR018257">
    <property type="entry name" value="Ribosomal_bL19_CS"/>
</dbReference>
<dbReference type="InterPro" id="IPR038657">
    <property type="entry name" value="Ribosomal_bL19_sf"/>
</dbReference>
<dbReference type="InterPro" id="IPR008991">
    <property type="entry name" value="Translation_prot_SH3-like_sf"/>
</dbReference>
<dbReference type="NCBIfam" id="TIGR01024">
    <property type="entry name" value="rplS_bact"/>
    <property type="match status" value="1"/>
</dbReference>
<dbReference type="PANTHER" id="PTHR15680:SF9">
    <property type="entry name" value="LARGE RIBOSOMAL SUBUNIT PROTEIN BL19M"/>
    <property type="match status" value="1"/>
</dbReference>
<dbReference type="PANTHER" id="PTHR15680">
    <property type="entry name" value="RIBOSOMAL PROTEIN L19"/>
    <property type="match status" value="1"/>
</dbReference>
<dbReference type="Pfam" id="PF01245">
    <property type="entry name" value="Ribosomal_L19"/>
    <property type="match status" value="1"/>
</dbReference>
<dbReference type="PIRSF" id="PIRSF002191">
    <property type="entry name" value="Ribosomal_L19"/>
    <property type="match status" value="1"/>
</dbReference>
<dbReference type="PRINTS" id="PR00061">
    <property type="entry name" value="RIBOSOMALL19"/>
</dbReference>
<dbReference type="SUPFAM" id="SSF50104">
    <property type="entry name" value="Translation proteins SH3-like domain"/>
    <property type="match status" value="1"/>
</dbReference>
<dbReference type="PROSITE" id="PS01015">
    <property type="entry name" value="RIBOSOMAL_L19"/>
    <property type="match status" value="1"/>
</dbReference>
<feature type="chain" id="PRO_0000226877" description="Large ribosomal subunit protein bL19">
    <location>
        <begin position="1"/>
        <end position="115"/>
    </location>
</feature>
<reference key="1">
    <citation type="journal article" date="2005" name="Proc. Natl. Acad. Sci. U.S.A.">
        <title>Genome analysis of multiple pathogenic isolates of Streptococcus agalactiae: implications for the microbial 'pan-genome'.</title>
        <authorList>
            <person name="Tettelin H."/>
            <person name="Masignani V."/>
            <person name="Cieslewicz M.J."/>
            <person name="Donati C."/>
            <person name="Medini D."/>
            <person name="Ward N.L."/>
            <person name="Angiuoli S.V."/>
            <person name="Crabtree J."/>
            <person name="Jones A.L."/>
            <person name="Durkin A.S."/>
            <person name="DeBoy R.T."/>
            <person name="Davidsen T.M."/>
            <person name="Mora M."/>
            <person name="Scarselli M."/>
            <person name="Margarit y Ros I."/>
            <person name="Peterson J.D."/>
            <person name="Hauser C.R."/>
            <person name="Sundaram J.P."/>
            <person name="Nelson W.C."/>
            <person name="Madupu R."/>
            <person name="Brinkac L.M."/>
            <person name="Dodson R.J."/>
            <person name="Rosovitz M.J."/>
            <person name="Sullivan S.A."/>
            <person name="Daugherty S.C."/>
            <person name="Haft D.H."/>
            <person name="Selengut J."/>
            <person name="Gwinn M.L."/>
            <person name="Zhou L."/>
            <person name="Zafar N."/>
            <person name="Khouri H."/>
            <person name="Radune D."/>
            <person name="Dimitrov G."/>
            <person name="Watkins K."/>
            <person name="O'Connor K.J."/>
            <person name="Smith S."/>
            <person name="Utterback T.R."/>
            <person name="White O."/>
            <person name="Rubens C.E."/>
            <person name="Grandi G."/>
            <person name="Madoff L.C."/>
            <person name="Kasper D.L."/>
            <person name="Telford J.L."/>
            <person name="Wessels M.R."/>
            <person name="Rappuoli R."/>
            <person name="Fraser C.M."/>
        </authorList>
    </citation>
    <scope>NUCLEOTIDE SEQUENCE [LARGE SCALE GENOMIC DNA]</scope>
    <source>
        <strain>ATCC 27591 / A909 / CDC SS700</strain>
    </source>
</reference>
<proteinExistence type="inferred from homology"/>
<name>RL19_STRA1</name>
<sequence>MNPLIQSLTEGQLRSDIPEFRAGDTVRVHAKVVEGTRERIQIFEGVVISRKGQGISEMYTVRKISGGIGVERTFPIHTPRVDKIEVVRYGKVRRAKLYYLRALQGKAARIKEIRR</sequence>
<gene>
    <name evidence="1" type="primary">rplS</name>
    <name type="ordered locus">SAK_0692</name>
</gene>
<accession>Q3K2D0</accession>
<keyword id="KW-0687">Ribonucleoprotein</keyword>
<keyword id="KW-0689">Ribosomal protein</keyword>
<evidence type="ECO:0000255" key="1">
    <source>
        <dbReference type="HAMAP-Rule" id="MF_00402"/>
    </source>
</evidence>
<evidence type="ECO:0000305" key="2"/>